<evidence type="ECO:0000255" key="1">
    <source>
        <dbReference type="PROSITE-ProRule" id="PRU01182"/>
    </source>
</evidence>
<evidence type="ECO:0000305" key="2"/>
<keyword id="KW-0378">Hydrolase</keyword>
<keyword id="KW-0479">Metal-binding</keyword>
<keyword id="KW-0482">Metalloprotease</keyword>
<keyword id="KW-0645">Protease</keyword>
<keyword id="KW-1185">Reference proteome</keyword>
<keyword id="KW-0862">Zinc</keyword>
<proteinExistence type="inferred from homology"/>
<protein>
    <recommendedName>
        <fullName>UPF0758 protein Dred_2549</fullName>
    </recommendedName>
</protein>
<gene>
    <name type="ordered locus">Dred_2549</name>
</gene>
<feature type="chain" id="PRO_0000322685" description="UPF0758 protein Dred_2549">
    <location>
        <begin position="1"/>
        <end position="227"/>
    </location>
</feature>
<feature type="domain" description="MPN" evidence="1">
    <location>
        <begin position="105"/>
        <end position="227"/>
    </location>
</feature>
<feature type="short sequence motif" description="JAMM motif" evidence="1">
    <location>
        <begin position="176"/>
        <end position="189"/>
    </location>
</feature>
<feature type="binding site" evidence="1">
    <location>
        <position position="176"/>
    </location>
    <ligand>
        <name>Zn(2+)</name>
        <dbReference type="ChEBI" id="CHEBI:29105"/>
        <note>catalytic</note>
    </ligand>
</feature>
<feature type="binding site" evidence="1">
    <location>
        <position position="178"/>
    </location>
    <ligand>
        <name>Zn(2+)</name>
        <dbReference type="ChEBI" id="CHEBI:29105"/>
        <note>catalytic</note>
    </ligand>
</feature>
<feature type="binding site" evidence="1">
    <location>
        <position position="189"/>
    </location>
    <ligand>
        <name>Zn(2+)</name>
        <dbReference type="ChEBI" id="CHEBI:29105"/>
        <note>catalytic</note>
    </ligand>
</feature>
<accession>A4J7K6</accession>
<sequence>MTYPVIRELPPEMRPRERMLKEGAGSLTEIDLLAIMLRTGTSKVSVLELAAELFSHFKDLRALSQATIEELSQIKGVGPVKAVQVKAALELGRRLAAMPAETRVIIRCPEDVCGLVMEDLRDLDREHFLALLLNTKNQVLARETISIGTLNSSVVHPRELFKVAIRRSAASMILVHNHPSGDPTPSREDIVLTKRLIEAGEIIGIDVLDHIIIGDNKFTSLKSKGLI</sequence>
<organism>
    <name type="scientific">Desulforamulus reducens (strain ATCC BAA-1160 / DSM 100696 / MI-1)</name>
    <name type="common">Desulfotomaculum reducens</name>
    <dbReference type="NCBI Taxonomy" id="349161"/>
    <lineage>
        <taxon>Bacteria</taxon>
        <taxon>Bacillati</taxon>
        <taxon>Bacillota</taxon>
        <taxon>Clostridia</taxon>
        <taxon>Eubacteriales</taxon>
        <taxon>Peptococcaceae</taxon>
        <taxon>Desulforamulus</taxon>
    </lineage>
</organism>
<dbReference type="EMBL" id="CP000612">
    <property type="protein sequence ID" value="ABO51059.1"/>
    <property type="molecule type" value="Genomic_DNA"/>
</dbReference>
<dbReference type="RefSeq" id="WP_011878857.1">
    <property type="nucleotide sequence ID" value="NC_009253.1"/>
</dbReference>
<dbReference type="SMR" id="A4J7K6"/>
<dbReference type="STRING" id="349161.Dred_2549"/>
<dbReference type="KEGG" id="drm:Dred_2549"/>
<dbReference type="eggNOG" id="COG2003">
    <property type="taxonomic scope" value="Bacteria"/>
</dbReference>
<dbReference type="HOGENOM" id="CLU_073529_0_2_9"/>
<dbReference type="OrthoDB" id="9804482at2"/>
<dbReference type="Proteomes" id="UP000001556">
    <property type="component" value="Chromosome"/>
</dbReference>
<dbReference type="GO" id="GO:0046872">
    <property type="term" value="F:metal ion binding"/>
    <property type="evidence" value="ECO:0007669"/>
    <property type="project" value="UniProtKB-KW"/>
</dbReference>
<dbReference type="GO" id="GO:0008237">
    <property type="term" value="F:metallopeptidase activity"/>
    <property type="evidence" value="ECO:0007669"/>
    <property type="project" value="UniProtKB-KW"/>
</dbReference>
<dbReference type="GO" id="GO:0006508">
    <property type="term" value="P:proteolysis"/>
    <property type="evidence" value="ECO:0007669"/>
    <property type="project" value="UniProtKB-KW"/>
</dbReference>
<dbReference type="CDD" id="cd08071">
    <property type="entry name" value="MPN_DUF2466"/>
    <property type="match status" value="1"/>
</dbReference>
<dbReference type="Gene3D" id="1.10.150.20">
    <property type="entry name" value="5' to 3' exonuclease, C-terminal subdomain"/>
    <property type="match status" value="1"/>
</dbReference>
<dbReference type="Gene3D" id="3.40.140.10">
    <property type="entry name" value="Cytidine Deaminase, domain 2"/>
    <property type="match status" value="1"/>
</dbReference>
<dbReference type="InterPro" id="IPR037518">
    <property type="entry name" value="MPN"/>
</dbReference>
<dbReference type="InterPro" id="IPR025657">
    <property type="entry name" value="RadC_JAB"/>
</dbReference>
<dbReference type="InterPro" id="IPR010994">
    <property type="entry name" value="RuvA_2-like"/>
</dbReference>
<dbReference type="InterPro" id="IPR001405">
    <property type="entry name" value="UPF0758"/>
</dbReference>
<dbReference type="InterPro" id="IPR020891">
    <property type="entry name" value="UPF0758_CS"/>
</dbReference>
<dbReference type="InterPro" id="IPR046778">
    <property type="entry name" value="UPF0758_N"/>
</dbReference>
<dbReference type="NCBIfam" id="NF000642">
    <property type="entry name" value="PRK00024.1"/>
    <property type="match status" value="1"/>
</dbReference>
<dbReference type="NCBIfam" id="TIGR00608">
    <property type="entry name" value="radc"/>
    <property type="match status" value="1"/>
</dbReference>
<dbReference type="PANTHER" id="PTHR30471">
    <property type="entry name" value="DNA REPAIR PROTEIN RADC"/>
    <property type="match status" value="1"/>
</dbReference>
<dbReference type="PANTHER" id="PTHR30471:SF3">
    <property type="entry name" value="UPF0758 PROTEIN YEES-RELATED"/>
    <property type="match status" value="1"/>
</dbReference>
<dbReference type="Pfam" id="PF04002">
    <property type="entry name" value="RadC"/>
    <property type="match status" value="1"/>
</dbReference>
<dbReference type="Pfam" id="PF20582">
    <property type="entry name" value="UPF0758_N"/>
    <property type="match status" value="1"/>
</dbReference>
<dbReference type="SUPFAM" id="SSF102712">
    <property type="entry name" value="JAB1/MPN domain"/>
    <property type="match status" value="1"/>
</dbReference>
<dbReference type="SUPFAM" id="SSF47781">
    <property type="entry name" value="RuvA domain 2-like"/>
    <property type="match status" value="1"/>
</dbReference>
<dbReference type="PROSITE" id="PS50249">
    <property type="entry name" value="MPN"/>
    <property type="match status" value="1"/>
</dbReference>
<dbReference type="PROSITE" id="PS01302">
    <property type="entry name" value="UPF0758"/>
    <property type="match status" value="1"/>
</dbReference>
<name>Y2549_DESRM</name>
<reference key="1">
    <citation type="submission" date="2007-03" db="EMBL/GenBank/DDBJ databases">
        <title>Complete sequence of Desulfotomaculum reducens MI-1.</title>
        <authorList>
            <consortium name="US DOE Joint Genome Institute"/>
            <person name="Copeland A."/>
            <person name="Lucas S."/>
            <person name="Lapidus A."/>
            <person name="Barry K."/>
            <person name="Detter J.C."/>
            <person name="Glavina del Rio T."/>
            <person name="Hammon N."/>
            <person name="Israni S."/>
            <person name="Dalin E."/>
            <person name="Tice H."/>
            <person name="Pitluck S."/>
            <person name="Sims D."/>
            <person name="Brettin T."/>
            <person name="Bruce D."/>
            <person name="Han C."/>
            <person name="Tapia R."/>
            <person name="Schmutz J."/>
            <person name="Larimer F."/>
            <person name="Land M."/>
            <person name="Hauser L."/>
            <person name="Kyrpides N."/>
            <person name="Kim E."/>
            <person name="Tebo B.M."/>
            <person name="Richardson P."/>
        </authorList>
    </citation>
    <scope>NUCLEOTIDE SEQUENCE [LARGE SCALE GENOMIC DNA]</scope>
    <source>
        <strain>ATCC BAA-1160 / DSM 100696 / MI-1</strain>
    </source>
</reference>
<comment type="similarity">
    <text evidence="2">Belongs to the UPF0758 family.</text>
</comment>